<accession>Q91V41</accession>
<gene>
    <name evidence="7" type="primary">Rab14</name>
</gene>
<reference key="1">
    <citation type="journal article" date="2005" name="Science">
        <title>The transcriptional landscape of the mammalian genome.</title>
        <authorList>
            <person name="Carninci P."/>
            <person name="Kasukawa T."/>
            <person name="Katayama S."/>
            <person name="Gough J."/>
            <person name="Frith M.C."/>
            <person name="Maeda N."/>
            <person name="Oyama R."/>
            <person name="Ravasi T."/>
            <person name="Lenhard B."/>
            <person name="Wells C."/>
            <person name="Kodzius R."/>
            <person name="Shimokawa K."/>
            <person name="Bajic V.B."/>
            <person name="Brenner S.E."/>
            <person name="Batalov S."/>
            <person name="Forrest A.R."/>
            <person name="Zavolan M."/>
            <person name="Davis M.J."/>
            <person name="Wilming L.G."/>
            <person name="Aidinis V."/>
            <person name="Allen J.E."/>
            <person name="Ambesi-Impiombato A."/>
            <person name="Apweiler R."/>
            <person name="Aturaliya R.N."/>
            <person name="Bailey T.L."/>
            <person name="Bansal M."/>
            <person name="Baxter L."/>
            <person name="Beisel K.W."/>
            <person name="Bersano T."/>
            <person name="Bono H."/>
            <person name="Chalk A.M."/>
            <person name="Chiu K.P."/>
            <person name="Choudhary V."/>
            <person name="Christoffels A."/>
            <person name="Clutterbuck D.R."/>
            <person name="Crowe M.L."/>
            <person name="Dalla E."/>
            <person name="Dalrymple B.P."/>
            <person name="de Bono B."/>
            <person name="Della Gatta G."/>
            <person name="di Bernardo D."/>
            <person name="Down T."/>
            <person name="Engstrom P."/>
            <person name="Fagiolini M."/>
            <person name="Faulkner G."/>
            <person name="Fletcher C.F."/>
            <person name="Fukushima T."/>
            <person name="Furuno M."/>
            <person name="Futaki S."/>
            <person name="Gariboldi M."/>
            <person name="Georgii-Hemming P."/>
            <person name="Gingeras T.R."/>
            <person name="Gojobori T."/>
            <person name="Green R.E."/>
            <person name="Gustincich S."/>
            <person name="Harbers M."/>
            <person name="Hayashi Y."/>
            <person name="Hensch T.K."/>
            <person name="Hirokawa N."/>
            <person name="Hill D."/>
            <person name="Huminiecki L."/>
            <person name="Iacono M."/>
            <person name="Ikeo K."/>
            <person name="Iwama A."/>
            <person name="Ishikawa T."/>
            <person name="Jakt M."/>
            <person name="Kanapin A."/>
            <person name="Katoh M."/>
            <person name="Kawasawa Y."/>
            <person name="Kelso J."/>
            <person name="Kitamura H."/>
            <person name="Kitano H."/>
            <person name="Kollias G."/>
            <person name="Krishnan S.P."/>
            <person name="Kruger A."/>
            <person name="Kummerfeld S.K."/>
            <person name="Kurochkin I.V."/>
            <person name="Lareau L.F."/>
            <person name="Lazarevic D."/>
            <person name="Lipovich L."/>
            <person name="Liu J."/>
            <person name="Liuni S."/>
            <person name="McWilliam S."/>
            <person name="Madan Babu M."/>
            <person name="Madera M."/>
            <person name="Marchionni L."/>
            <person name="Matsuda H."/>
            <person name="Matsuzawa S."/>
            <person name="Miki H."/>
            <person name="Mignone F."/>
            <person name="Miyake S."/>
            <person name="Morris K."/>
            <person name="Mottagui-Tabar S."/>
            <person name="Mulder N."/>
            <person name="Nakano N."/>
            <person name="Nakauchi H."/>
            <person name="Ng P."/>
            <person name="Nilsson R."/>
            <person name="Nishiguchi S."/>
            <person name="Nishikawa S."/>
            <person name="Nori F."/>
            <person name="Ohara O."/>
            <person name="Okazaki Y."/>
            <person name="Orlando V."/>
            <person name="Pang K.C."/>
            <person name="Pavan W.J."/>
            <person name="Pavesi G."/>
            <person name="Pesole G."/>
            <person name="Petrovsky N."/>
            <person name="Piazza S."/>
            <person name="Reed J."/>
            <person name="Reid J.F."/>
            <person name="Ring B.Z."/>
            <person name="Ringwald M."/>
            <person name="Rost B."/>
            <person name="Ruan Y."/>
            <person name="Salzberg S.L."/>
            <person name="Sandelin A."/>
            <person name="Schneider C."/>
            <person name="Schoenbach C."/>
            <person name="Sekiguchi K."/>
            <person name="Semple C.A."/>
            <person name="Seno S."/>
            <person name="Sessa L."/>
            <person name="Sheng Y."/>
            <person name="Shibata Y."/>
            <person name="Shimada H."/>
            <person name="Shimada K."/>
            <person name="Silva D."/>
            <person name="Sinclair B."/>
            <person name="Sperling S."/>
            <person name="Stupka E."/>
            <person name="Sugiura K."/>
            <person name="Sultana R."/>
            <person name="Takenaka Y."/>
            <person name="Taki K."/>
            <person name="Tammoja K."/>
            <person name="Tan S.L."/>
            <person name="Tang S."/>
            <person name="Taylor M.S."/>
            <person name="Tegner J."/>
            <person name="Teichmann S.A."/>
            <person name="Ueda H.R."/>
            <person name="van Nimwegen E."/>
            <person name="Verardo R."/>
            <person name="Wei C.L."/>
            <person name="Yagi K."/>
            <person name="Yamanishi H."/>
            <person name="Zabarovsky E."/>
            <person name="Zhu S."/>
            <person name="Zimmer A."/>
            <person name="Hide W."/>
            <person name="Bult C."/>
            <person name="Grimmond S.M."/>
            <person name="Teasdale R.D."/>
            <person name="Liu E.T."/>
            <person name="Brusic V."/>
            <person name="Quackenbush J."/>
            <person name="Wahlestedt C."/>
            <person name="Mattick J.S."/>
            <person name="Hume D.A."/>
            <person name="Kai C."/>
            <person name="Sasaki D."/>
            <person name="Tomaru Y."/>
            <person name="Fukuda S."/>
            <person name="Kanamori-Katayama M."/>
            <person name="Suzuki M."/>
            <person name="Aoki J."/>
            <person name="Arakawa T."/>
            <person name="Iida J."/>
            <person name="Imamura K."/>
            <person name="Itoh M."/>
            <person name="Kato T."/>
            <person name="Kawaji H."/>
            <person name="Kawagashira N."/>
            <person name="Kawashima T."/>
            <person name="Kojima M."/>
            <person name="Kondo S."/>
            <person name="Konno H."/>
            <person name="Nakano K."/>
            <person name="Ninomiya N."/>
            <person name="Nishio T."/>
            <person name="Okada M."/>
            <person name="Plessy C."/>
            <person name="Shibata K."/>
            <person name="Shiraki T."/>
            <person name="Suzuki S."/>
            <person name="Tagami M."/>
            <person name="Waki K."/>
            <person name="Watahiki A."/>
            <person name="Okamura-Oho Y."/>
            <person name="Suzuki H."/>
            <person name="Kawai J."/>
            <person name="Hayashizaki Y."/>
        </authorList>
    </citation>
    <scope>NUCLEOTIDE SEQUENCE [LARGE SCALE MRNA]</scope>
    <source>
        <strain>C57BL/6J</strain>
        <tissue>Kidney</tissue>
    </source>
</reference>
<reference key="2">
    <citation type="journal article" date="2004" name="Genome Res.">
        <title>The status, quality, and expansion of the NIH full-length cDNA project: the Mammalian Gene Collection (MGC).</title>
        <authorList>
            <consortium name="The MGC Project Team"/>
        </authorList>
    </citation>
    <scope>NUCLEOTIDE SEQUENCE [LARGE SCALE MRNA]</scope>
    <source>
        <tissue>Mammary tumor</tissue>
    </source>
</reference>
<reference key="3">
    <citation type="submission" date="2007-04" db="UniProtKB">
        <authorList>
            <person name="Lubec G."/>
            <person name="Kang S.U."/>
        </authorList>
    </citation>
    <scope>PROTEIN SEQUENCE OF 14-24; 52-59; 62-72; 83-95; 111-125; 133-140 AND 202-210</scope>
    <scope>IDENTIFICATION BY MASS SPECTROMETRY</scope>
    <source>
        <strain>C57BL/6J</strain>
        <tissue>Brain</tissue>
    </source>
</reference>
<reference key="4">
    <citation type="journal article" date="2010" name="Cell">
        <title>A tissue-specific atlas of mouse protein phosphorylation and expression.</title>
        <authorList>
            <person name="Huttlin E.L."/>
            <person name="Jedrychowski M.P."/>
            <person name="Elias J.E."/>
            <person name="Goswami T."/>
            <person name="Rad R."/>
            <person name="Beausoleil S.A."/>
            <person name="Villen J."/>
            <person name="Haas W."/>
            <person name="Sowa M.E."/>
            <person name="Gygi S.P."/>
        </authorList>
    </citation>
    <scope>IDENTIFICATION BY MASS SPECTROMETRY [LARGE SCALE ANALYSIS]</scope>
    <source>
        <tissue>Brain</tissue>
        <tissue>Brown adipose tissue</tissue>
        <tissue>Heart</tissue>
        <tissue>Kidney</tissue>
        <tissue>Liver</tissue>
        <tissue>Lung</tissue>
        <tissue>Pancreas</tissue>
        <tissue>Spleen</tissue>
        <tissue>Testis</tissue>
    </source>
</reference>
<reference key="5">
    <citation type="journal article" date="2011" name="Dev. Cell">
        <title>KIF16B/Rab14 molecular motor complex is critical for early embryonic development by transporting FGF receptor.</title>
        <authorList>
            <person name="Ueno H."/>
            <person name="Huang X."/>
            <person name="Tanaka Y."/>
            <person name="Hirokawa N."/>
        </authorList>
    </citation>
    <scope>FUNCTION</scope>
    <scope>INTERACTION WITH KIF16B</scope>
</reference>
<name>RAB14_MOUSE</name>
<sequence>MATAPYNYSYIFKYIIIGDMGVGKSCLLHQFTEKKFMADCPHTIGVEFGTRIIEVSGQKIKLQIWDTAGQERFRAVTRSYYRGAAGALMVYDITRRSTYNHLSSWLTDARNLTNPNTVIILIGNKADLEAQRDVTYEEAKQFAEENGLLFLEASAKTGENVEDAFLEAAKKIYQNIQDGSLDLNAAESGVQHKPSAPQGGRLTSEPQPQREGCGC</sequence>
<protein>
    <recommendedName>
        <fullName>Ras-related protein Rab-14</fullName>
        <ecNumber evidence="2">3.6.5.2</ecNumber>
    </recommendedName>
</protein>
<comment type="function">
    <text evidence="2 3 5">The small GTPases Rab are key regulators of intracellular membrane trafficking, from the formation of transport vesicles to their fusion with membranes. Rabs cycle between an inactive GDP-bound form and an active GTP-bound form that is able to recruit to membranes different set of downstream effectors directly responsible for vesicle formation, movement, tethering and fusion (By similarity). Involved in membrane trafficking between the Golgi complex and endosomes during early embryonic development (By similarity). Regulates the Golgi to endosome transport of FGFR-containing vesicles during early development, a key process for developing basement membrane and epiblast and primitive endoderm lineages during early postimplantation development. May act by modulating the kinesin KIF16B-cargo association to endosomes (PubMed:21238925). Regulates, together with its guanine nucleotide exchange factor DENND6A, the specific endocytic transport of ADAM10, N-cadherin/CDH2 shedding and cell-cell adhesion. Mediates endosomal tethering and fusion through the interaction with RUFY1 and RAB4B (By similarity). Interaction with RAB11FIP1 may function in the process of neurite formation (By similarity).</text>
</comment>
<comment type="catalytic activity">
    <reaction evidence="2">
        <text>GTP + H2O = GDP + phosphate + H(+)</text>
        <dbReference type="Rhea" id="RHEA:19669"/>
        <dbReference type="ChEBI" id="CHEBI:15377"/>
        <dbReference type="ChEBI" id="CHEBI:15378"/>
        <dbReference type="ChEBI" id="CHEBI:37565"/>
        <dbReference type="ChEBI" id="CHEBI:43474"/>
        <dbReference type="ChEBI" id="CHEBI:58189"/>
        <dbReference type="EC" id="3.6.5.2"/>
    </reaction>
    <physiologicalReaction direction="left-to-right" evidence="2">
        <dbReference type="Rhea" id="RHEA:19670"/>
    </physiologicalReaction>
</comment>
<comment type="cofactor">
    <cofactor evidence="2">
        <name>Mg(2+)</name>
        <dbReference type="ChEBI" id="CHEBI:18420"/>
    </cofactor>
</comment>
<comment type="activity regulation">
    <text evidence="2">Regulated by guanine nucleotide exchange factors (GEFs) including DENND6A and DENND6B which promote the exchange of bound GDP for free GTP. Regulated by GTPase activating proteins (GAPs) which increase the GTP hydrolysis activity. Inhibited by GDP dissociation inhibitors (GDIs) which prevent Rab-GDP dissociation.</text>
</comment>
<comment type="subunit">
    <text evidence="2 5">Interacts with ZFYVE20 (By similarity). Interacts with KIF16B (PubMed:21238925). Interacts (GTP-bound form) with RUFY1; the interaction recruits RUFY1 onto endosomal membranes (By similarity). Interacts (GTP-bound form) with RAB11FIP1 (via its C-terminus); the interactions doesn't mediate RAB11FIP1 rectruitment to membranes (By similarity). Interacts with RAB11FIP2 (By similarity).</text>
</comment>
<comment type="subcellular location">
    <subcellularLocation>
        <location evidence="2">Recycling endosome</location>
    </subcellularLocation>
    <subcellularLocation>
        <location evidence="2">Early endosome membrane</location>
        <topology evidence="2">Lipid-anchor</topology>
        <orientation evidence="2">Cytoplasmic side</orientation>
    </subcellularLocation>
    <subcellularLocation>
        <location evidence="2">Golgi apparatus membrane</location>
        <topology evidence="2">Lipid-anchor</topology>
        <orientation evidence="2">Cytoplasmic side</orientation>
    </subcellularLocation>
    <subcellularLocation>
        <location evidence="2">Golgi apparatus</location>
        <location evidence="2">trans-Golgi network membrane</location>
        <topology evidence="2">Lipid-anchor</topology>
        <orientation evidence="2">Cytoplasmic side</orientation>
    </subcellularLocation>
    <subcellularLocation>
        <location evidence="2">Cytoplasmic vesicle</location>
        <location evidence="2">Phagosome</location>
    </subcellularLocation>
    <text evidence="2">Recruited to recycling endosomes by DENND6A.</text>
</comment>
<comment type="domain">
    <text evidence="2">Switch 1, switch 2 and the interswitch regions are characteristic of Rab GTPases and mediate the interactions with Rab downstream effectors. The switch regions undergo conformational changes upon nucleotide binding which drives interaction with specific sets of effector proteins, with most effectors only binding to GTP-bound Rab.</text>
</comment>
<comment type="similarity">
    <text evidence="6">Belongs to the small GTPase superfamily. Rab family.</text>
</comment>
<keyword id="KW-0007">Acetylation</keyword>
<keyword id="KW-0968">Cytoplasmic vesicle</keyword>
<keyword id="KW-0903">Direct protein sequencing</keyword>
<keyword id="KW-0967">Endosome</keyword>
<keyword id="KW-0333">Golgi apparatus</keyword>
<keyword id="KW-0342">GTP-binding</keyword>
<keyword id="KW-0378">Hydrolase</keyword>
<keyword id="KW-0449">Lipoprotein</keyword>
<keyword id="KW-0460">Magnesium</keyword>
<keyword id="KW-0472">Membrane</keyword>
<keyword id="KW-0479">Metal-binding</keyword>
<keyword id="KW-0488">Methylation</keyword>
<keyword id="KW-0547">Nucleotide-binding</keyword>
<keyword id="KW-0636">Prenylation</keyword>
<keyword id="KW-0653">Protein transport</keyword>
<keyword id="KW-1185">Reference proteome</keyword>
<keyword id="KW-0813">Transport</keyword>
<evidence type="ECO:0000250" key="1"/>
<evidence type="ECO:0000250" key="2">
    <source>
        <dbReference type="UniProtKB" id="P61106"/>
    </source>
</evidence>
<evidence type="ECO:0000250" key="3">
    <source>
        <dbReference type="UniProtKB" id="P61107"/>
    </source>
</evidence>
<evidence type="ECO:0000256" key="4">
    <source>
        <dbReference type="SAM" id="MobiDB-lite"/>
    </source>
</evidence>
<evidence type="ECO:0000269" key="5">
    <source>
    </source>
</evidence>
<evidence type="ECO:0000305" key="6"/>
<evidence type="ECO:0000312" key="7">
    <source>
        <dbReference type="MGI" id="MGI:1915615"/>
    </source>
</evidence>
<organism>
    <name type="scientific">Mus musculus</name>
    <name type="common">Mouse</name>
    <dbReference type="NCBI Taxonomy" id="10090"/>
    <lineage>
        <taxon>Eukaryota</taxon>
        <taxon>Metazoa</taxon>
        <taxon>Chordata</taxon>
        <taxon>Craniata</taxon>
        <taxon>Vertebrata</taxon>
        <taxon>Euteleostomi</taxon>
        <taxon>Mammalia</taxon>
        <taxon>Eutheria</taxon>
        <taxon>Euarchontoglires</taxon>
        <taxon>Glires</taxon>
        <taxon>Rodentia</taxon>
        <taxon>Myomorpha</taxon>
        <taxon>Muroidea</taxon>
        <taxon>Muridae</taxon>
        <taxon>Murinae</taxon>
        <taxon>Mus</taxon>
        <taxon>Mus</taxon>
    </lineage>
</organism>
<proteinExistence type="evidence at protein level"/>
<dbReference type="EC" id="3.6.5.2" evidence="2"/>
<dbReference type="EMBL" id="AK002704">
    <property type="protein sequence ID" value="BAB22298.1"/>
    <property type="molecule type" value="mRNA"/>
</dbReference>
<dbReference type="EMBL" id="BC009085">
    <property type="protein sequence ID" value="AAH09085.1"/>
    <property type="molecule type" value="mRNA"/>
</dbReference>
<dbReference type="EMBL" id="BC025139">
    <property type="protein sequence ID" value="AAH25139.1"/>
    <property type="molecule type" value="mRNA"/>
</dbReference>
<dbReference type="EMBL" id="BC056648">
    <property type="protein sequence ID" value="AAH56648.1"/>
    <property type="molecule type" value="mRNA"/>
</dbReference>
<dbReference type="CCDS" id="CCDS15959.1"/>
<dbReference type="RefSeq" id="NP_080973.1">
    <property type="nucleotide sequence ID" value="NM_026697.4"/>
</dbReference>
<dbReference type="SMR" id="Q91V41"/>
<dbReference type="BioGRID" id="212822">
    <property type="interactions" value="26"/>
</dbReference>
<dbReference type="FunCoup" id="Q91V41">
    <property type="interactions" value="4263"/>
</dbReference>
<dbReference type="IntAct" id="Q91V41">
    <property type="interactions" value="7"/>
</dbReference>
<dbReference type="MINT" id="Q91V41"/>
<dbReference type="STRING" id="10090.ENSMUSP00000028238"/>
<dbReference type="GlyGen" id="Q91V41">
    <property type="glycosylation" value="3 sites, 1 N-linked glycan (1 site), 1 O-linked glycan (1 site)"/>
</dbReference>
<dbReference type="iPTMnet" id="Q91V41"/>
<dbReference type="PhosphoSitePlus" id="Q91V41"/>
<dbReference type="SwissPalm" id="Q91V41"/>
<dbReference type="jPOST" id="Q91V41"/>
<dbReference type="PaxDb" id="10090-ENSMUSP00000028238"/>
<dbReference type="ProteomicsDB" id="300372"/>
<dbReference type="Pumba" id="Q91V41"/>
<dbReference type="Antibodypedia" id="15967">
    <property type="antibodies" value="170 antibodies from 32 providers"/>
</dbReference>
<dbReference type="DNASU" id="68365"/>
<dbReference type="Ensembl" id="ENSMUST00000028238.15">
    <property type="protein sequence ID" value="ENSMUSP00000028238.9"/>
    <property type="gene ID" value="ENSMUSG00000026878.18"/>
</dbReference>
<dbReference type="GeneID" id="68365"/>
<dbReference type="KEGG" id="mmu:68365"/>
<dbReference type="UCSC" id="uc008jjz.1">
    <property type="organism name" value="mouse"/>
</dbReference>
<dbReference type="AGR" id="MGI:1915615"/>
<dbReference type="CTD" id="51552"/>
<dbReference type="MGI" id="MGI:1915615">
    <property type="gene designation" value="Rab14"/>
</dbReference>
<dbReference type="VEuPathDB" id="HostDB:ENSMUSG00000026878"/>
<dbReference type="eggNOG" id="KOG0097">
    <property type="taxonomic scope" value="Eukaryota"/>
</dbReference>
<dbReference type="GeneTree" id="ENSGT00940000155178"/>
<dbReference type="InParanoid" id="Q91V41"/>
<dbReference type="OMA" id="ANGVMQY"/>
<dbReference type="OrthoDB" id="9989112at2759"/>
<dbReference type="PhylomeDB" id="Q91V41"/>
<dbReference type="TreeFam" id="TF300032"/>
<dbReference type="Reactome" id="R-MMU-1660499">
    <property type="pathway name" value="Synthesis of PIPs at the plasma membrane"/>
</dbReference>
<dbReference type="Reactome" id="R-MMU-6798695">
    <property type="pathway name" value="Neutrophil degranulation"/>
</dbReference>
<dbReference type="Reactome" id="R-MMU-8873719">
    <property type="pathway name" value="RAB geranylgeranylation"/>
</dbReference>
<dbReference type="Reactome" id="R-MMU-8876198">
    <property type="pathway name" value="RAB GEFs exchange GTP for GDP on RABs"/>
</dbReference>
<dbReference type="BioGRID-ORCS" id="68365">
    <property type="hits" value="10 hits in 63 CRISPR screens"/>
</dbReference>
<dbReference type="CD-CODE" id="8F289D40">
    <property type="entry name" value="ELVA"/>
</dbReference>
<dbReference type="ChiTaRS" id="Rab14">
    <property type="organism name" value="mouse"/>
</dbReference>
<dbReference type="PRO" id="PR:Q91V41"/>
<dbReference type="Proteomes" id="UP000000589">
    <property type="component" value="Chromosome 2"/>
</dbReference>
<dbReference type="RNAct" id="Q91V41">
    <property type="molecule type" value="protein"/>
</dbReference>
<dbReference type="Bgee" id="ENSMUSG00000026878">
    <property type="expression patterns" value="Expressed in metanephric cortical collecting duct and 267 other cell types or tissues"/>
</dbReference>
<dbReference type="ExpressionAtlas" id="Q91V41">
    <property type="expression patterns" value="baseline and differential"/>
</dbReference>
<dbReference type="GO" id="GO:0030659">
    <property type="term" value="C:cytoplasmic vesicle membrane"/>
    <property type="evidence" value="ECO:0000304"/>
    <property type="project" value="Reactome"/>
</dbReference>
<dbReference type="GO" id="GO:0005829">
    <property type="term" value="C:cytosol"/>
    <property type="evidence" value="ECO:0007669"/>
    <property type="project" value="GOC"/>
</dbReference>
<dbReference type="GO" id="GO:0031901">
    <property type="term" value="C:early endosome membrane"/>
    <property type="evidence" value="ECO:0007669"/>
    <property type="project" value="UniProtKB-SubCell"/>
</dbReference>
<dbReference type="GO" id="GO:0000139">
    <property type="term" value="C:Golgi membrane"/>
    <property type="evidence" value="ECO:0007669"/>
    <property type="project" value="UniProtKB-SubCell"/>
</dbReference>
<dbReference type="GO" id="GO:0045335">
    <property type="term" value="C:phagocytic vesicle"/>
    <property type="evidence" value="ECO:0000250"/>
    <property type="project" value="UniProtKB"/>
</dbReference>
<dbReference type="GO" id="GO:0055037">
    <property type="term" value="C:recycling endosome"/>
    <property type="evidence" value="ECO:0000250"/>
    <property type="project" value="UniProtKB"/>
</dbReference>
<dbReference type="GO" id="GO:0005802">
    <property type="term" value="C:trans-Golgi network"/>
    <property type="evidence" value="ECO:0007669"/>
    <property type="project" value="InterPro"/>
</dbReference>
<dbReference type="GO" id="GO:0003925">
    <property type="term" value="F:G protein activity"/>
    <property type="evidence" value="ECO:0000250"/>
    <property type="project" value="UniProtKB"/>
</dbReference>
<dbReference type="GO" id="GO:0019003">
    <property type="term" value="F:GDP binding"/>
    <property type="evidence" value="ECO:0000250"/>
    <property type="project" value="UniProtKB"/>
</dbReference>
<dbReference type="GO" id="GO:0005525">
    <property type="term" value="F:GTP binding"/>
    <property type="evidence" value="ECO:0000250"/>
    <property type="project" value="UniProtKB"/>
</dbReference>
<dbReference type="GO" id="GO:0003924">
    <property type="term" value="F:GTPase activity"/>
    <property type="evidence" value="ECO:0000250"/>
    <property type="project" value="UniProtKB"/>
</dbReference>
<dbReference type="GO" id="GO:0031489">
    <property type="term" value="F:myosin V binding"/>
    <property type="evidence" value="ECO:0007669"/>
    <property type="project" value="Ensembl"/>
</dbReference>
<dbReference type="GO" id="GO:0042742">
    <property type="term" value="P:defense response to bacterium"/>
    <property type="evidence" value="ECO:0007669"/>
    <property type="project" value="InterPro"/>
</dbReference>
<dbReference type="GO" id="GO:0034498">
    <property type="term" value="P:early endosome to Golgi transport"/>
    <property type="evidence" value="ECO:0007669"/>
    <property type="project" value="Ensembl"/>
</dbReference>
<dbReference type="GO" id="GO:0032456">
    <property type="term" value="P:endocytic recycling"/>
    <property type="evidence" value="ECO:0000250"/>
    <property type="project" value="UniProtKB"/>
</dbReference>
<dbReference type="GO" id="GO:0034058">
    <property type="term" value="P:endosomal vesicle fusion"/>
    <property type="evidence" value="ECO:0007669"/>
    <property type="project" value="Ensembl"/>
</dbReference>
<dbReference type="GO" id="GO:0008543">
    <property type="term" value="P:fibroblast growth factor receptor signaling pathway"/>
    <property type="evidence" value="ECO:0000315"/>
    <property type="project" value="UniProtKB"/>
</dbReference>
<dbReference type="GO" id="GO:0006895">
    <property type="term" value="P:Golgi to endosome transport"/>
    <property type="evidence" value="ECO:0000315"/>
    <property type="project" value="UniProtKB"/>
</dbReference>
<dbReference type="GO" id="GO:0090382">
    <property type="term" value="P:phagosome maturation"/>
    <property type="evidence" value="ECO:0007669"/>
    <property type="project" value="InterPro"/>
</dbReference>
<dbReference type="GO" id="GO:0015031">
    <property type="term" value="P:protein transport"/>
    <property type="evidence" value="ECO:0007669"/>
    <property type="project" value="UniProtKB-KW"/>
</dbReference>
<dbReference type="GO" id="GO:0045995">
    <property type="term" value="P:regulation of embryonic development"/>
    <property type="evidence" value="ECO:0000315"/>
    <property type="project" value="UniProtKB"/>
</dbReference>
<dbReference type="GO" id="GO:0032880">
    <property type="term" value="P:regulation of protein localization"/>
    <property type="evidence" value="ECO:0000250"/>
    <property type="project" value="UniProtKB"/>
</dbReference>
<dbReference type="CDD" id="cd04122">
    <property type="entry name" value="Rab14"/>
    <property type="match status" value="1"/>
</dbReference>
<dbReference type="FunFam" id="3.40.50.300:FF:000344">
    <property type="entry name" value="Ras-related protein Rab-14"/>
    <property type="match status" value="1"/>
</dbReference>
<dbReference type="Gene3D" id="3.40.50.300">
    <property type="entry name" value="P-loop containing nucleotide triphosphate hydrolases"/>
    <property type="match status" value="1"/>
</dbReference>
<dbReference type="InterPro" id="IPR027417">
    <property type="entry name" value="P-loop_NTPase"/>
</dbReference>
<dbReference type="InterPro" id="IPR030702">
    <property type="entry name" value="Rab14"/>
</dbReference>
<dbReference type="InterPro" id="IPR050209">
    <property type="entry name" value="Rab_GTPases_membrane_traffic"/>
</dbReference>
<dbReference type="InterPro" id="IPR005225">
    <property type="entry name" value="Small_GTP-bd"/>
</dbReference>
<dbReference type="InterPro" id="IPR001806">
    <property type="entry name" value="Small_GTPase"/>
</dbReference>
<dbReference type="NCBIfam" id="TIGR00231">
    <property type="entry name" value="small_GTP"/>
    <property type="match status" value="1"/>
</dbReference>
<dbReference type="PANTHER" id="PTHR47979">
    <property type="entry name" value="DRAB11-RELATED"/>
    <property type="match status" value="1"/>
</dbReference>
<dbReference type="Pfam" id="PF00071">
    <property type="entry name" value="Ras"/>
    <property type="match status" value="1"/>
</dbReference>
<dbReference type="PRINTS" id="PR00449">
    <property type="entry name" value="RASTRNSFRMNG"/>
</dbReference>
<dbReference type="SMART" id="SM00175">
    <property type="entry name" value="RAB"/>
    <property type="match status" value="1"/>
</dbReference>
<dbReference type="SMART" id="SM00176">
    <property type="entry name" value="RAN"/>
    <property type="match status" value="1"/>
</dbReference>
<dbReference type="SMART" id="SM00173">
    <property type="entry name" value="RAS"/>
    <property type="match status" value="1"/>
</dbReference>
<dbReference type="SMART" id="SM00174">
    <property type="entry name" value="RHO"/>
    <property type="match status" value="1"/>
</dbReference>
<dbReference type="SUPFAM" id="SSF52540">
    <property type="entry name" value="P-loop containing nucleoside triphosphate hydrolases"/>
    <property type="match status" value="1"/>
</dbReference>
<dbReference type="PROSITE" id="PS51419">
    <property type="entry name" value="RAB"/>
    <property type="match status" value="1"/>
</dbReference>
<feature type="initiator methionine" description="Removed" evidence="2">
    <location>
        <position position="1"/>
    </location>
</feature>
<feature type="chain" id="PRO_0000121186" description="Ras-related protein Rab-14">
    <location>
        <begin position="2"/>
        <end position="215"/>
    </location>
</feature>
<feature type="region of interest" description="Disordered" evidence="4">
    <location>
        <begin position="188"/>
        <end position="215"/>
    </location>
</feature>
<feature type="short sequence motif" description="Switch 1" evidence="2">
    <location>
        <begin position="42"/>
        <end position="47"/>
    </location>
</feature>
<feature type="short sequence motif" description="Switch 2" evidence="2">
    <location>
        <begin position="68"/>
        <end position="77"/>
    </location>
</feature>
<feature type="binding site" evidence="2">
    <location>
        <position position="21"/>
    </location>
    <ligand>
        <name>GTP</name>
        <dbReference type="ChEBI" id="CHEBI:37565"/>
    </ligand>
</feature>
<feature type="binding site" evidence="2">
    <location>
        <position position="22"/>
    </location>
    <ligand>
        <name>GTP</name>
        <dbReference type="ChEBI" id="CHEBI:37565"/>
    </ligand>
</feature>
<feature type="binding site" evidence="2">
    <location>
        <position position="23"/>
    </location>
    <ligand>
        <name>GTP</name>
        <dbReference type="ChEBI" id="CHEBI:37565"/>
    </ligand>
</feature>
<feature type="binding site" evidence="2">
    <location>
        <position position="24"/>
    </location>
    <ligand>
        <name>GTP</name>
        <dbReference type="ChEBI" id="CHEBI:37565"/>
    </ligand>
</feature>
<feature type="binding site" evidence="2">
    <location>
        <position position="25"/>
    </location>
    <ligand>
        <name>GTP</name>
        <dbReference type="ChEBI" id="CHEBI:37565"/>
    </ligand>
</feature>
<feature type="binding site" evidence="2">
    <location>
        <position position="25"/>
    </location>
    <ligand>
        <name>Mg(2+)</name>
        <dbReference type="ChEBI" id="CHEBI:18420"/>
    </ligand>
</feature>
<feature type="binding site" evidence="2">
    <location>
        <position position="26"/>
    </location>
    <ligand>
        <name>GTP</name>
        <dbReference type="ChEBI" id="CHEBI:37565"/>
    </ligand>
</feature>
<feature type="binding site" evidence="2">
    <location>
        <position position="38"/>
    </location>
    <ligand>
        <name>GTP</name>
        <dbReference type="ChEBI" id="CHEBI:37565"/>
    </ligand>
</feature>
<feature type="binding site" evidence="2">
    <location>
        <position position="39"/>
    </location>
    <ligand>
        <name>GTP</name>
        <dbReference type="ChEBI" id="CHEBI:37565"/>
    </ligand>
</feature>
<feature type="binding site" evidence="2">
    <location>
        <position position="40"/>
    </location>
    <ligand>
        <name>GTP</name>
        <dbReference type="ChEBI" id="CHEBI:37565"/>
    </ligand>
</feature>
<feature type="binding site" evidence="2">
    <location>
        <position position="42"/>
    </location>
    <ligand>
        <name>GTP</name>
        <dbReference type="ChEBI" id="CHEBI:37565"/>
    </ligand>
</feature>
<feature type="binding site" evidence="2">
    <location>
        <position position="43"/>
    </location>
    <ligand>
        <name>GTP</name>
        <dbReference type="ChEBI" id="CHEBI:37565"/>
    </ligand>
</feature>
<feature type="binding site" evidence="2">
    <location>
        <position position="43"/>
    </location>
    <ligand>
        <name>Mg(2+)</name>
        <dbReference type="ChEBI" id="CHEBI:18420"/>
    </ligand>
</feature>
<feature type="binding site" evidence="2">
    <location>
        <position position="66"/>
    </location>
    <ligand>
        <name>Mg(2+)</name>
        <dbReference type="ChEBI" id="CHEBI:18420"/>
    </ligand>
</feature>
<feature type="binding site" evidence="2">
    <location>
        <position position="69"/>
    </location>
    <ligand>
        <name>GTP</name>
        <dbReference type="ChEBI" id="CHEBI:37565"/>
    </ligand>
</feature>
<feature type="binding site" evidence="2">
    <location>
        <position position="124"/>
    </location>
    <ligand>
        <name>GTP</name>
        <dbReference type="ChEBI" id="CHEBI:37565"/>
    </ligand>
</feature>
<feature type="binding site" evidence="2">
    <location>
        <position position="125"/>
    </location>
    <ligand>
        <name>GTP</name>
        <dbReference type="ChEBI" id="CHEBI:37565"/>
    </ligand>
</feature>
<feature type="binding site" evidence="2">
    <location>
        <position position="127"/>
    </location>
    <ligand>
        <name>GTP</name>
        <dbReference type="ChEBI" id="CHEBI:37565"/>
    </ligand>
</feature>
<feature type="binding site" evidence="2">
    <location>
        <position position="155"/>
    </location>
    <ligand>
        <name>GTP</name>
        <dbReference type="ChEBI" id="CHEBI:37565"/>
    </ligand>
</feature>
<feature type="binding site" evidence="2">
    <location>
        <position position="156"/>
    </location>
    <ligand>
        <name>GTP</name>
        <dbReference type="ChEBI" id="CHEBI:37565"/>
    </ligand>
</feature>
<feature type="modified residue" description="N-acetylalanine" evidence="2">
    <location>
        <position position="2"/>
    </location>
</feature>
<feature type="modified residue" description="Cysteine methyl ester" evidence="1">
    <location>
        <position position="215"/>
    </location>
</feature>
<feature type="lipid moiety-binding region" description="S-geranylgeranyl cysteine" evidence="1">
    <location>
        <position position="213"/>
    </location>
</feature>
<feature type="lipid moiety-binding region" description="S-geranylgeranyl cysteine" evidence="1">
    <location>
        <position position="215"/>
    </location>
</feature>